<name>CLPB_VIBVU</name>
<dbReference type="EMBL" id="AE016795">
    <property type="protein sequence ID" value="AAO09001.1"/>
    <property type="molecule type" value="Genomic_DNA"/>
</dbReference>
<dbReference type="RefSeq" id="WP_011078571.1">
    <property type="nucleotide sequence ID" value="NC_004459.3"/>
</dbReference>
<dbReference type="SMR" id="Q8DEV2"/>
<dbReference type="KEGG" id="vvu:VV1_0482"/>
<dbReference type="HOGENOM" id="CLU_005070_4_0_6"/>
<dbReference type="Proteomes" id="UP000002275">
    <property type="component" value="Chromosome 1"/>
</dbReference>
<dbReference type="GO" id="GO:0005737">
    <property type="term" value="C:cytoplasm"/>
    <property type="evidence" value="ECO:0007669"/>
    <property type="project" value="UniProtKB-SubCell"/>
</dbReference>
<dbReference type="GO" id="GO:0005524">
    <property type="term" value="F:ATP binding"/>
    <property type="evidence" value="ECO:0007669"/>
    <property type="project" value="UniProtKB-KW"/>
</dbReference>
<dbReference type="GO" id="GO:0016887">
    <property type="term" value="F:ATP hydrolysis activity"/>
    <property type="evidence" value="ECO:0007669"/>
    <property type="project" value="InterPro"/>
</dbReference>
<dbReference type="GO" id="GO:0034605">
    <property type="term" value="P:cellular response to heat"/>
    <property type="evidence" value="ECO:0007669"/>
    <property type="project" value="TreeGrafter"/>
</dbReference>
<dbReference type="GO" id="GO:0042026">
    <property type="term" value="P:protein refolding"/>
    <property type="evidence" value="ECO:0007669"/>
    <property type="project" value="InterPro"/>
</dbReference>
<dbReference type="CDD" id="cd00009">
    <property type="entry name" value="AAA"/>
    <property type="match status" value="1"/>
</dbReference>
<dbReference type="CDD" id="cd19499">
    <property type="entry name" value="RecA-like_ClpB_Hsp104-like"/>
    <property type="match status" value="1"/>
</dbReference>
<dbReference type="FunFam" id="1.10.1780.10:FF:000003">
    <property type="entry name" value="ATP-dependent chaperone ClpB"/>
    <property type="match status" value="1"/>
</dbReference>
<dbReference type="FunFam" id="1.10.8.60:FF:000017">
    <property type="entry name" value="ATP-dependent chaperone ClpB"/>
    <property type="match status" value="1"/>
</dbReference>
<dbReference type="FunFam" id="3.40.50.300:FF:000120">
    <property type="entry name" value="ATP-dependent chaperone ClpB"/>
    <property type="match status" value="1"/>
</dbReference>
<dbReference type="FunFam" id="3.40.50.300:FF:000025">
    <property type="entry name" value="ATP-dependent Clp protease subunit"/>
    <property type="match status" value="1"/>
</dbReference>
<dbReference type="FunFam" id="3.40.50.300:FF:000010">
    <property type="entry name" value="Chaperone clpB 1, putative"/>
    <property type="match status" value="1"/>
</dbReference>
<dbReference type="Gene3D" id="1.10.8.60">
    <property type="match status" value="1"/>
</dbReference>
<dbReference type="Gene3D" id="1.10.1780.10">
    <property type="entry name" value="Clp, N-terminal domain"/>
    <property type="match status" value="1"/>
</dbReference>
<dbReference type="Gene3D" id="3.40.50.300">
    <property type="entry name" value="P-loop containing nucleotide triphosphate hydrolases"/>
    <property type="match status" value="3"/>
</dbReference>
<dbReference type="InterPro" id="IPR003593">
    <property type="entry name" value="AAA+_ATPase"/>
</dbReference>
<dbReference type="InterPro" id="IPR003959">
    <property type="entry name" value="ATPase_AAA_core"/>
</dbReference>
<dbReference type="InterPro" id="IPR017730">
    <property type="entry name" value="Chaperonin_ClpB"/>
</dbReference>
<dbReference type="InterPro" id="IPR019489">
    <property type="entry name" value="Clp_ATPase_C"/>
</dbReference>
<dbReference type="InterPro" id="IPR036628">
    <property type="entry name" value="Clp_N_dom_sf"/>
</dbReference>
<dbReference type="InterPro" id="IPR004176">
    <property type="entry name" value="Clp_R_dom"/>
</dbReference>
<dbReference type="InterPro" id="IPR001270">
    <property type="entry name" value="ClpA/B"/>
</dbReference>
<dbReference type="InterPro" id="IPR018368">
    <property type="entry name" value="ClpA/B_CS1"/>
</dbReference>
<dbReference type="InterPro" id="IPR028299">
    <property type="entry name" value="ClpA/B_CS2"/>
</dbReference>
<dbReference type="InterPro" id="IPR041546">
    <property type="entry name" value="ClpA/ClpB_AAA_lid"/>
</dbReference>
<dbReference type="InterPro" id="IPR050130">
    <property type="entry name" value="ClpA_ClpB"/>
</dbReference>
<dbReference type="InterPro" id="IPR027417">
    <property type="entry name" value="P-loop_NTPase"/>
</dbReference>
<dbReference type="NCBIfam" id="TIGR03346">
    <property type="entry name" value="chaperone_ClpB"/>
    <property type="match status" value="1"/>
</dbReference>
<dbReference type="NCBIfam" id="NF008118">
    <property type="entry name" value="PRK10865.1"/>
    <property type="match status" value="1"/>
</dbReference>
<dbReference type="PANTHER" id="PTHR11638">
    <property type="entry name" value="ATP-DEPENDENT CLP PROTEASE"/>
    <property type="match status" value="1"/>
</dbReference>
<dbReference type="PANTHER" id="PTHR11638:SF18">
    <property type="entry name" value="HEAT SHOCK PROTEIN 104"/>
    <property type="match status" value="1"/>
</dbReference>
<dbReference type="Pfam" id="PF00004">
    <property type="entry name" value="AAA"/>
    <property type="match status" value="1"/>
</dbReference>
<dbReference type="Pfam" id="PF07724">
    <property type="entry name" value="AAA_2"/>
    <property type="match status" value="1"/>
</dbReference>
<dbReference type="Pfam" id="PF17871">
    <property type="entry name" value="AAA_lid_9"/>
    <property type="match status" value="1"/>
</dbReference>
<dbReference type="Pfam" id="PF02861">
    <property type="entry name" value="Clp_N"/>
    <property type="match status" value="2"/>
</dbReference>
<dbReference type="Pfam" id="PF10431">
    <property type="entry name" value="ClpB_D2-small"/>
    <property type="match status" value="1"/>
</dbReference>
<dbReference type="PRINTS" id="PR00300">
    <property type="entry name" value="CLPPROTEASEA"/>
</dbReference>
<dbReference type="SMART" id="SM00382">
    <property type="entry name" value="AAA"/>
    <property type="match status" value="2"/>
</dbReference>
<dbReference type="SMART" id="SM01086">
    <property type="entry name" value="ClpB_D2-small"/>
    <property type="match status" value="1"/>
</dbReference>
<dbReference type="SUPFAM" id="SSF81923">
    <property type="entry name" value="Double Clp-N motif"/>
    <property type="match status" value="1"/>
</dbReference>
<dbReference type="SUPFAM" id="SSF52540">
    <property type="entry name" value="P-loop containing nucleoside triphosphate hydrolases"/>
    <property type="match status" value="2"/>
</dbReference>
<dbReference type="PROSITE" id="PS51903">
    <property type="entry name" value="CLP_R"/>
    <property type="match status" value="1"/>
</dbReference>
<dbReference type="PROSITE" id="PS00870">
    <property type="entry name" value="CLPAB_1"/>
    <property type="match status" value="1"/>
</dbReference>
<dbReference type="PROSITE" id="PS00871">
    <property type="entry name" value="CLPAB_2"/>
    <property type="match status" value="1"/>
</dbReference>
<sequence length="857" mass="96036">MRLDRFTSKFQIAISDAQSLALGRDHQYIEPVHLMVALLDQNGSPIRPLLTILNVDVTHLRSKLSEMLDRLPKVSGIGGDVQLSSAMGAMFNLCDKIAQKRQDAYISSEIFLLAAIEDRGPLGQLFKELGLTEQKVSQAIEQIRGGQKVNDQNAEELRQALEKFTIDLTERAEQGKLDPVIGRDDEIRRTIQVLQRRTKNNPVIIGEPGVGKTAIVEGLAQRIINNEVPEGLRGRRVLSLDMGALVAGAKYRGEFEERLKSVLNELSKEEGNIILFIDELHTMVGAGKGEGSMDAGNMLKPALARGELHCVGATTLDEYRQYIEKDPALERRFQKVLVDEPTVEDTIAILRGLKERYELHHHVEITDPAIVAAASLSHRYVSDRQLPDKAIDLIDEAASSIRMQIDSKPEALDKLERKIIQLKIEQQALSNEHDEASEKRLRSLNEELNEKEREFAELEEIWNAEKAALSGTQHIKAALEQARMDMEFARRAGDLSRMSELQYGRIPELEKQLDLATQAEMQEMTLLKNKVTDNEIAEVLSKQTGIPVSKMLEAEKEKLLRMEEVLHKRVIGQKEAVEVVANAIRRSRAGLSDPNKPIGSFLFLGPTGVGKTELCKTLANFMFDSEDAMVRIDMSEFMEKHSVARLVGAPPGYVGYEEGGYLTEAVRRKPYSVILLDEVEKAHPDVFNILLQVLDDGRLTDGQGRTVDFRNTVVIMTSNLGSSRIQENFAMLDYQGIKEQVMEVVTKHFRPEFLNRVDETVVFHPLGQDHIKSIAAIQLNRLANRMEEHGYPLEVSDKALELIAQVGFDPVYGARPLKRAIQQSIENPLAKSILAGSVLPDKKIQLIVNNDQIVAHQ</sequence>
<protein>
    <recommendedName>
        <fullName>Chaperone protein ClpB</fullName>
    </recommendedName>
</protein>
<accession>Q8DEV2</accession>
<feature type="chain" id="PRO_0000191202" description="Chaperone protein ClpB">
    <location>
        <begin position="1"/>
        <end position="857"/>
    </location>
</feature>
<feature type="domain" description="Clp R" evidence="2">
    <location>
        <begin position="3"/>
        <end position="146"/>
    </location>
</feature>
<feature type="region of interest" description="Repeat 1" evidence="2">
    <location>
        <begin position="6"/>
        <end position="71"/>
    </location>
</feature>
<feature type="region of interest" description="Repeat 2" evidence="2">
    <location>
        <begin position="83"/>
        <end position="146"/>
    </location>
</feature>
<feature type="region of interest" description="NBD1" evidence="1">
    <location>
        <begin position="159"/>
        <end position="340"/>
    </location>
</feature>
<feature type="region of interest" description="Linker" evidence="1">
    <location>
        <begin position="341"/>
        <end position="545"/>
    </location>
</feature>
<feature type="region of interest" description="NBD2" evidence="1">
    <location>
        <begin position="555"/>
        <end position="765"/>
    </location>
</feature>
<feature type="region of interest" description="C-terminal" evidence="1">
    <location>
        <begin position="766"/>
        <end position="857"/>
    </location>
</feature>
<feature type="coiled-coil region" evidence="1">
    <location>
        <begin position="391"/>
        <end position="525"/>
    </location>
</feature>
<feature type="binding site" evidence="1">
    <location>
        <begin position="206"/>
        <end position="213"/>
    </location>
    <ligand>
        <name>ATP</name>
        <dbReference type="ChEBI" id="CHEBI:30616"/>
        <label>1</label>
    </ligand>
</feature>
<feature type="binding site" evidence="1">
    <location>
        <begin position="605"/>
        <end position="612"/>
    </location>
    <ligand>
        <name>ATP</name>
        <dbReference type="ChEBI" id="CHEBI:30616"/>
        <label>2</label>
    </ligand>
</feature>
<comment type="function">
    <text evidence="1">Part of a stress-induced multi-chaperone system, it is involved in the recovery of the cell from heat-induced damage, in cooperation with DnaK, DnaJ and GrpE. Acts before DnaK, in the processing of protein aggregates. Protein binding stimulates the ATPase activity; ATP hydrolysis unfolds the denatured protein aggregates, which probably helps expose new hydrophobic binding sites on the surface of ClpB-bound aggregates, contributing to the solubilization and refolding of denatured protein aggregates by DnaK (By similarity).</text>
</comment>
<comment type="subunit">
    <text evidence="1">Homohexamer. The oligomerization is ATP-dependent (By similarity).</text>
</comment>
<comment type="subcellular location">
    <subcellularLocation>
        <location evidence="3">Cytoplasm</location>
    </subcellularLocation>
</comment>
<comment type="domain">
    <text evidence="1">The Clp repeat (R) domain probably functions as a substrate-discriminating domain, recruiting aggregated proteins to the ClpB hexamer and/or stabilizing bound proteins. The NBD2 domain is responsible for oligomerization, whereas the NBD1 domain stabilizes the hexamer probably in an ATP-dependent manner. The movement of the coiled-coil domain is essential for ClpB ability to rescue proteins from an aggregated state, probably by pulling apart large aggregated proteins, which are bound between the coiled-coils motifs of adjacent ClpB subunits in the functional hexamer (By similarity).</text>
</comment>
<comment type="similarity">
    <text evidence="3">Belongs to the ClpA/ClpB family.</text>
</comment>
<gene>
    <name type="primary">clpB</name>
    <name type="ordered locus">VV1_0482</name>
</gene>
<organism>
    <name type="scientific">Vibrio vulnificus (strain CMCP6)</name>
    <dbReference type="NCBI Taxonomy" id="216895"/>
    <lineage>
        <taxon>Bacteria</taxon>
        <taxon>Pseudomonadati</taxon>
        <taxon>Pseudomonadota</taxon>
        <taxon>Gammaproteobacteria</taxon>
        <taxon>Vibrionales</taxon>
        <taxon>Vibrionaceae</taxon>
        <taxon>Vibrio</taxon>
    </lineage>
</organism>
<keyword id="KW-0067">ATP-binding</keyword>
<keyword id="KW-0143">Chaperone</keyword>
<keyword id="KW-0175">Coiled coil</keyword>
<keyword id="KW-0963">Cytoplasm</keyword>
<keyword id="KW-0547">Nucleotide-binding</keyword>
<keyword id="KW-0677">Repeat</keyword>
<keyword id="KW-0346">Stress response</keyword>
<reference key="1">
    <citation type="submission" date="2002-12" db="EMBL/GenBank/DDBJ databases">
        <title>Complete genome sequence of Vibrio vulnificus CMCP6.</title>
        <authorList>
            <person name="Rhee J.H."/>
            <person name="Kim S.Y."/>
            <person name="Chung S.S."/>
            <person name="Kim J.J."/>
            <person name="Moon Y.H."/>
            <person name="Jeong H."/>
            <person name="Choy H.E."/>
        </authorList>
    </citation>
    <scope>NUCLEOTIDE SEQUENCE [LARGE SCALE GENOMIC DNA]</scope>
    <source>
        <strain>CMCP6</strain>
    </source>
</reference>
<evidence type="ECO:0000250" key="1"/>
<evidence type="ECO:0000255" key="2">
    <source>
        <dbReference type="PROSITE-ProRule" id="PRU01251"/>
    </source>
</evidence>
<evidence type="ECO:0000305" key="3"/>
<proteinExistence type="inferred from homology"/>